<gene>
    <name type="primary">RTC1</name>
    <name type="ORF">CTRG_05804</name>
</gene>
<accession>C5MIB1</accession>
<protein>
    <recommendedName>
        <fullName>Restriction of telomere capping protein 1</fullName>
    </recommendedName>
</protein>
<organism>
    <name type="scientific">Candida tropicalis (strain ATCC MYA-3404 / T1)</name>
    <name type="common">Yeast</name>
    <dbReference type="NCBI Taxonomy" id="294747"/>
    <lineage>
        <taxon>Eukaryota</taxon>
        <taxon>Fungi</taxon>
        <taxon>Dikarya</taxon>
        <taxon>Ascomycota</taxon>
        <taxon>Saccharomycotina</taxon>
        <taxon>Pichiomycetes</taxon>
        <taxon>Debaryomycetaceae</taxon>
        <taxon>Candida/Lodderomyces clade</taxon>
        <taxon>Candida</taxon>
    </lineage>
</organism>
<comment type="function">
    <text evidence="1">May be involved in a process influencing telomere capping.</text>
</comment>
<comment type="subcellular location">
    <subcellularLocation>
        <location evidence="1">Vacuole</location>
    </subcellularLocation>
</comment>
<comment type="similarity">
    <text evidence="4">Belongs to the WD repeat RTC1 family.</text>
</comment>
<reference key="1">
    <citation type="journal article" date="2009" name="Nature">
        <title>Evolution of pathogenicity and sexual reproduction in eight Candida genomes.</title>
        <authorList>
            <person name="Butler G."/>
            <person name="Rasmussen M.D."/>
            <person name="Lin M.F."/>
            <person name="Santos M.A.S."/>
            <person name="Sakthikumar S."/>
            <person name="Munro C.A."/>
            <person name="Rheinbay E."/>
            <person name="Grabherr M."/>
            <person name="Forche A."/>
            <person name="Reedy J.L."/>
            <person name="Agrafioti I."/>
            <person name="Arnaud M.B."/>
            <person name="Bates S."/>
            <person name="Brown A.J.P."/>
            <person name="Brunke S."/>
            <person name="Costanzo M.C."/>
            <person name="Fitzpatrick D.A."/>
            <person name="de Groot P.W.J."/>
            <person name="Harris D."/>
            <person name="Hoyer L.L."/>
            <person name="Hube B."/>
            <person name="Klis F.M."/>
            <person name="Kodira C."/>
            <person name="Lennard N."/>
            <person name="Logue M.E."/>
            <person name="Martin R."/>
            <person name="Neiman A.M."/>
            <person name="Nikolaou E."/>
            <person name="Quail M.A."/>
            <person name="Quinn J."/>
            <person name="Santos M.C."/>
            <person name="Schmitzberger F.F."/>
            <person name="Sherlock G."/>
            <person name="Shah P."/>
            <person name="Silverstein K.A.T."/>
            <person name="Skrzypek M.S."/>
            <person name="Soll D."/>
            <person name="Staggs R."/>
            <person name="Stansfield I."/>
            <person name="Stumpf M.P.H."/>
            <person name="Sudbery P.E."/>
            <person name="Srikantha T."/>
            <person name="Zeng Q."/>
            <person name="Berman J."/>
            <person name="Berriman M."/>
            <person name="Heitman J."/>
            <person name="Gow N.A.R."/>
            <person name="Lorenz M.C."/>
            <person name="Birren B.W."/>
            <person name="Kellis M."/>
            <person name="Cuomo C.A."/>
        </authorList>
    </citation>
    <scope>NUCLEOTIDE SEQUENCE [LARGE SCALE GENOMIC DNA]</scope>
    <source>
        <strain>ATCC MYA-3404 / T1</strain>
    </source>
</reference>
<evidence type="ECO:0000250" key="1"/>
<evidence type="ECO:0000255" key="2">
    <source>
        <dbReference type="PROSITE-ProRule" id="PRU00175"/>
    </source>
</evidence>
<evidence type="ECO:0000256" key="3">
    <source>
        <dbReference type="SAM" id="MobiDB-lite"/>
    </source>
</evidence>
<evidence type="ECO:0000305" key="4"/>
<feature type="chain" id="PRO_0000408781" description="Restriction of telomere capping protein 1">
    <location>
        <begin position="1"/>
        <end position="1110"/>
    </location>
</feature>
<feature type="repeat" description="WD 1">
    <location>
        <begin position="132"/>
        <end position="171"/>
    </location>
</feature>
<feature type="repeat" description="WD 2">
    <location>
        <begin position="177"/>
        <end position="216"/>
    </location>
</feature>
<feature type="repeat" description="WD 3">
    <location>
        <begin position="223"/>
        <end position="267"/>
    </location>
</feature>
<feature type="repeat" description="WD 4">
    <location>
        <begin position="277"/>
        <end position="316"/>
    </location>
</feature>
<feature type="repeat" description="WD 5">
    <location>
        <begin position="348"/>
        <end position="390"/>
    </location>
</feature>
<feature type="repeat" description="WD 6">
    <location>
        <begin position="393"/>
        <end position="426"/>
    </location>
</feature>
<feature type="repeat" description="WD 7">
    <location>
        <begin position="439"/>
        <end position="483"/>
    </location>
</feature>
<feature type="repeat" description="WD 8">
    <location>
        <begin position="637"/>
        <end position="675"/>
    </location>
</feature>
<feature type="repeat" description="WD 9">
    <location>
        <begin position="860"/>
        <end position="906"/>
    </location>
</feature>
<feature type="zinc finger region" description="RING-type; degenerate" evidence="2">
    <location>
        <begin position="1062"/>
        <end position="1105"/>
    </location>
</feature>
<feature type="region of interest" description="Disordered" evidence="3">
    <location>
        <begin position="27"/>
        <end position="57"/>
    </location>
</feature>
<feature type="region of interest" description="Disordered" evidence="3">
    <location>
        <begin position="552"/>
        <end position="575"/>
    </location>
</feature>
<feature type="region of interest" description="Disordered" evidence="3">
    <location>
        <begin position="692"/>
        <end position="714"/>
    </location>
</feature>
<feature type="region of interest" description="Disordered" evidence="3">
    <location>
        <begin position="734"/>
        <end position="755"/>
    </location>
</feature>
<feature type="region of interest" description="Disordered" evidence="3">
    <location>
        <begin position="779"/>
        <end position="819"/>
    </location>
</feature>
<feature type="compositionally biased region" description="Low complexity" evidence="3">
    <location>
        <begin position="38"/>
        <end position="48"/>
    </location>
</feature>
<feature type="compositionally biased region" description="Polar residues" evidence="3">
    <location>
        <begin position="552"/>
        <end position="574"/>
    </location>
</feature>
<feature type="compositionally biased region" description="Polar residues" evidence="3">
    <location>
        <begin position="734"/>
        <end position="743"/>
    </location>
</feature>
<feature type="compositionally biased region" description="Basic and acidic residues" evidence="3">
    <location>
        <begin position="791"/>
        <end position="813"/>
    </location>
</feature>
<name>RTC1_CANTT</name>
<proteinExistence type="inferred from homology"/>
<keyword id="KW-0479">Metal-binding</keyword>
<keyword id="KW-1185">Reference proteome</keyword>
<keyword id="KW-0677">Repeat</keyword>
<keyword id="KW-0926">Vacuole</keyword>
<keyword id="KW-0853">WD repeat</keyword>
<keyword id="KW-0862">Zinc</keyword>
<keyword id="KW-0863">Zinc-finger</keyword>
<dbReference type="EMBL" id="GG692404">
    <property type="protein sequence ID" value="EER30405.1"/>
    <property type="molecule type" value="Genomic_DNA"/>
</dbReference>
<dbReference type="RefSeq" id="XP_002546326.1">
    <property type="nucleotide sequence ID" value="XM_002546280.1"/>
</dbReference>
<dbReference type="SMR" id="C5MIB1"/>
<dbReference type="STRING" id="294747.C5MIB1"/>
<dbReference type="EnsemblFungi" id="CTRG_05804-t43_1">
    <property type="protein sequence ID" value="CTRG_05804-t43_1-p1"/>
    <property type="gene ID" value="CTRG_05804"/>
</dbReference>
<dbReference type="GeneID" id="8296728"/>
<dbReference type="KEGG" id="ctp:CTRG_05804"/>
<dbReference type="VEuPathDB" id="FungiDB:CTRG_05804"/>
<dbReference type="eggNOG" id="KOG0269">
    <property type="taxonomic scope" value="Eukaryota"/>
</dbReference>
<dbReference type="HOGENOM" id="CLU_008512_0_0_1"/>
<dbReference type="OrthoDB" id="60955at2759"/>
<dbReference type="Proteomes" id="UP000002037">
    <property type="component" value="Unassembled WGS sequence"/>
</dbReference>
<dbReference type="GO" id="GO:0005829">
    <property type="term" value="C:cytosol"/>
    <property type="evidence" value="ECO:0007669"/>
    <property type="project" value="TreeGrafter"/>
</dbReference>
<dbReference type="GO" id="GO:0061700">
    <property type="term" value="C:GATOR2 complex"/>
    <property type="evidence" value="ECO:0007669"/>
    <property type="project" value="TreeGrafter"/>
</dbReference>
<dbReference type="GO" id="GO:0005774">
    <property type="term" value="C:vacuolar membrane"/>
    <property type="evidence" value="ECO:0007669"/>
    <property type="project" value="TreeGrafter"/>
</dbReference>
<dbReference type="GO" id="GO:0008270">
    <property type="term" value="F:zinc ion binding"/>
    <property type="evidence" value="ECO:0007669"/>
    <property type="project" value="UniProtKB-KW"/>
</dbReference>
<dbReference type="GO" id="GO:0016239">
    <property type="term" value="P:positive regulation of macroautophagy"/>
    <property type="evidence" value="ECO:0007669"/>
    <property type="project" value="TreeGrafter"/>
</dbReference>
<dbReference type="GO" id="GO:1904263">
    <property type="term" value="P:positive regulation of TORC1 signaling"/>
    <property type="evidence" value="ECO:0007669"/>
    <property type="project" value="TreeGrafter"/>
</dbReference>
<dbReference type="CDD" id="cd16488">
    <property type="entry name" value="mRING-H2-C3H3C2_Mio-like"/>
    <property type="match status" value="1"/>
</dbReference>
<dbReference type="Gene3D" id="2.130.10.10">
    <property type="entry name" value="YVTN repeat-like/Quinoprotein amine dehydrogenase"/>
    <property type="match status" value="1"/>
</dbReference>
<dbReference type="InterPro" id="IPR015943">
    <property type="entry name" value="WD40/YVTN_repeat-like_dom_sf"/>
</dbReference>
<dbReference type="InterPro" id="IPR019775">
    <property type="entry name" value="WD40_repeat_CS"/>
</dbReference>
<dbReference type="InterPro" id="IPR036322">
    <property type="entry name" value="WD40_repeat_dom_sf"/>
</dbReference>
<dbReference type="InterPro" id="IPR001680">
    <property type="entry name" value="WD40_rpt"/>
</dbReference>
<dbReference type="InterPro" id="IPR037590">
    <property type="entry name" value="WDR24"/>
</dbReference>
<dbReference type="InterPro" id="IPR049566">
    <property type="entry name" value="WDR59_RTC1-like_RING_Znf"/>
</dbReference>
<dbReference type="InterPro" id="IPR001841">
    <property type="entry name" value="Znf_RING"/>
</dbReference>
<dbReference type="PANTHER" id="PTHR46200">
    <property type="entry name" value="GATOR COMPLEX PROTEIN WDR24"/>
    <property type="match status" value="1"/>
</dbReference>
<dbReference type="PANTHER" id="PTHR46200:SF1">
    <property type="entry name" value="GATOR COMPLEX PROTEIN WDR24"/>
    <property type="match status" value="1"/>
</dbReference>
<dbReference type="Pfam" id="PF00400">
    <property type="entry name" value="WD40"/>
    <property type="match status" value="2"/>
</dbReference>
<dbReference type="Pfam" id="PF17120">
    <property type="entry name" value="zf-RING_16"/>
    <property type="match status" value="1"/>
</dbReference>
<dbReference type="SMART" id="SM00320">
    <property type="entry name" value="WD40"/>
    <property type="match status" value="3"/>
</dbReference>
<dbReference type="SUPFAM" id="SSF50978">
    <property type="entry name" value="WD40 repeat-like"/>
    <property type="match status" value="1"/>
</dbReference>
<dbReference type="PROSITE" id="PS00678">
    <property type="entry name" value="WD_REPEATS_1"/>
    <property type="match status" value="1"/>
</dbReference>
<dbReference type="PROSITE" id="PS50082">
    <property type="entry name" value="WD_REPEATS_2"/>
    <property type="match status" value="1"/>
</dbReference>
<dbReference type="PROSITE" id="PS50294">
    <property type="entry name" value="WD_REPEATS_REGION"/>
    <property type="match status" value="1"/>
</dbReference>
<dbReference type="PROSITE" id="PS50089">
    <property type="entry name" value="ZF_RING_2"/>
    <property type="match status" value="1"/>
</dbReference>
<sequence length="1110" mass="123250">MSSSTNGHSQSNFAKFAFNIYGTLSTTSSSTPQSHEISPSPSSSLSSSRSRRNKQSFRAATGHRLTYQCDKETISLSQLNYPLQVGGYGTELHSIVIGGKNYLRLLCISESQQRIIDDINLLESKSIYNSRVGSKLININTIKTYESTIATGLSNGVVSVYKISPNGQGKQTGRFSDHKRTINSLDFIESENQLLSGSQDGTIKLWDLRSSSSKPSITIQASMRSDPIRACQYSPHSSVKNKMCVLSVHDSGALCKFDLRSTGGNGNIYSPEKKWNLHTGPALSLHIHPEKEYVITGGRDQRISVFNYGEGQSNSSTPENTIITYGPVLKVRWSSYSNISQSGDEFEEAQSSLSPSKINPLYNYDIACSYLNDDPTVAIYNLSRKYVPKQIIHSKKPIQNFIWARNGHRDRNIWTLTKSNTFNSYNLDQIDEYDVSRPLDDLNNVAVAWDNNGNFSMANQDKYDFELDDNDIYDRPEGSSEAEVASHGMDPEESGNAIHFHNSATTSPVEKAALARSYTHNPMSAIQLPTKSPLPIGRNGTGFLGHDMSLPNISTRPKLTRNTSQTTQDSSVSYGSAYPIPQSANSNTTLHMKRNIISNSTKSSNTSAYVIPVVLPIVSNDEFVFKKLSSEYLVKLPDGFTMIDVCLLNASTAASVNSNRTCQVWRLLAVSLQEHFDSQKAPMTIEELEKQQMEQNENEEGVPNATVESATDSMPAKSVSSVLGNFVESYKTNSSFGTGSQINKPGKSVKSRTSSGVNLMDKINLASRTSSFSKTSFKFKEKEGVDEDGVPEDKEKQERGKAEDQETENDKKSIHSNQEPIVIRTTRHSKVEDLDDENLNIANSMAMKSSPTSVGISLPSSHTFSSSIASSPQPIRGQIPPKQQLATTRESPVHNWLDQKKNELFRGRNVVPAISGLSLALKSSNNGDEKLLTRAWKFKNLLRKSLDYAMLQGDVIFCSTAAILFYEFAEDTISEYEYLEWVSLYIDILQKKKLFVTAINILNSTAGSIKSKLQKIYSVDLDLRFYCSNCETLLVNEKSQMSQKGEFGYWYCDECNKLQSKCVYCNEPCKGLAVVVGLKCGHQGHFGCLKEWFIQDENMECPGGCDYQIL</sequence>